<reference key="1">
    <citation type="journal article" date="2004" name="J. Mol. Microbiol. Biotechnol.">
        <title>The complete genome sequence of Bacillus licheniformis DSM13, an organism with great industrial potential.</title>
        <authorList>
            <person name="Veith B."/>
            <person name="Herzberg C."/>
            <person name="Steckel S."/>
            <person name="Feesche J."/>
            <person name="Maurer K.H."/>
            <person name="Ehrenreich P."/>
            <person name="Baeumer S."/>
            <person name="Henne A."/>
            <person name="Liesegang H."/>
            <person name="Merkl R."/>
            <person name="Ehrenreich A."/>
            <person name="Gottschalk G."/>
        </authorList>
    </citation>
    <scope>NUCLEOTIDE SEQUENCE [LARGE SCALE GENOMIC DNA]</scope>
    <source>
        <strain>ATCC 14580 / DSM 13 / JCM 2505 / CCUG 7422 / NBRC 12200 / NCIMB 9375 / NCTC 10341 / NRRL NRS-1264 / Gibson 46</strain>
    </source>
</reference>
<reference key="2">
    <citation type="journal article" date="2004" name="Genome Biol.">
        <title>Complete genome sequence of the industrial bacterium Bacillus licheniformis and comparisons with closely related Bacillus species.</title>
        <authorList>
            <person name="Rey M.W."/>
            <person name="Ramaiya P."/>
            <person name="Nelson B.A."/>
            <person name="Brody-Karpin S.D."/>
            <person name="Zaretsky E.J."/>
            <person name="Tang M."/>
            <person name="Lopez de Leon A."/>
            <person name="Xiang H."/>
            <person name="Gusti V."/>
            <person name="Clausen I.G."/>
            <person name="Olsen P.B."/>
            <person name="Rasmussen M.D."/>
            <person name="Andersen J.T."/>
            <person name="Joergensen P.L."/>
            <person name="Larsen T.S."/>
            <person name="Sorokin A."/>
            <person name="Bolotin A."/>
            <person name="Lapidus A."/>
            <person name="Galleron N."/>
            <person name="Ehrlich S.D."/>
            <person name="Berka R.M."/>
        </authorList>
    </citation>
    <scope>NUCLEOTIDE SEQUENCE [LARGE SCALE GENOMIC DNA]</scope>
    <source>
        <strain>ATCC 14580 / DSM 13 / JCM 2505 / CCUG 7422 / NBRC 12200 / NCIMB 9375 / NCTC 10341 / NRRL NRS-1264 / Gibson 46</strain>
    </source>
</reference>
<name>Y1727_BACLD</name>
<accession>Q65JZ2</accession>
<accession>Q62VE3</accession>
<organism>
    <name type="scientific">Bacillus licheniformis (strain ATCC 14580 / DSM 13 / JCM 2505 / CCUG 7422 / NBRC 12200 / NCIMB 9375 / NCTC 10341 / NRRL NRS-1264 / Gibson 46)</name>
    <dbReference type="NCBI Taxonomy" id="279010"/>
    <lineage>
        <taxon>Bacteria</taxon>
        <taxon>Bacillati</taxon>
        <taxon>Bacillota</taxon>
        <taxon>Bacilli</taxon>
        <taxon>Bacillales</taxon>
        <taxon>Bacillaceae</taxon>
        <taxon>Bacillus</taxon>
    </lineage>
</organism>
<feature type="chain" id="PRO_0000232477" description="Uncharacterized N-acetyltransferase BLi01727/BL05157">
    <location>
        <begin position="1"/>
        <end position="159"/>
    </location>
</feature>
<feature type="domain" description="N-acetyltransferase">
    <location>
        <begin position="7"/>
        <end position="151"/>
    </location>
</feature>
<keyword id="KW-0012">Acyltransferase</keyword>
<keyword id="KW-1185">Reference proteome</keyword>
<keyword id="KW-0808">Transferase</keyword>
<sequence length="159" mass="18557">MVKVERLLINYKTLEEFKKFREYGIQELSMLEDLESNMIENDSNSPFYGIYYGNRLVARMSLYKVDGKSNQYFEEGQDYLELWKLEVLPGYQRNGYGTMLVEFAKSFGLPIRTSPRVKSSDFWNKMGFTPVKYDMARDKGENPLVWHPASEPSQSSESA</sequence>
<dbReference type="EC" id="2.3.1.-"/>
<dbReference type="EMBL" id="AE017333">
    <property type="protein sequence ID" value="AAU40622.1"/>
    <property type="molecule type" value="Genomic_DNA"/>
</dbReference>
<dbReference type="EMBL" id="CP000002">
    <property type="protein sequence ID" value="AAU23265.1"/>
    <property type="molecule type" value="Genomic_DNA"/>
</dbReference>
<dbReference type="RefSeq" id="WP_003181526.1">
    <property type="nucleotide sequence ID" value="NC_006322.1"/>
</dbReference>
<dbReference type="SMR" id="Q65JZ2"/>
<dbReference type="STRING" id="279010.BL05157"/>
<dbReference type="KEGG" id="bld:BLi01727"/>
<dbReference type="KEGG" id="bli:BL05157"/>
<dbReference type="eggNOG" id="COG0454">
    <property type="taxonomic scope" value="Bacteria"/>
</dbReference>
<dbReference type="HOGENOM" id="CLU_136634_0_0_9"/>
<dbReference type="Proteomes" id="UP000000606">
    <property type="component" value="Chromosome"/>
</dbReference>
<dbReference type="GO" id="GO:0016747">
    <property type="term" value="F:acyltransferase activity, transferring groups other than amino-acyl groups"/>
    <property type="evidence" value="ECO:0007669"/>
    <property type="project" value="UniProtKB-UniRule"/>
</dbReference>
<dbReference type="CDD" id="cd04301">
    <property type="entry name" value="NAT_SF"/>
    <property type="match status" value="1"/>
</dbReference>
<dbReference type="Gene3D" id="3.40.630.30">
    <property type="match status" value="1"/>
</dbReference>
<dbReference type="HAMAP" id="MF_00824">
    <property type="entry name" value="Acetyltransf_YlbP"/>
    <property type="match status" value="1"/>
</dbReference>
<dbReference type="InterPro" id="IPR016181">
    <property type="entry name" value="Acyl_CoA_acyltransferase"/>
</dbReference>
<dbReference type="InterPro" id="IPR000182">
    <property type="entry name" value="GNAT_dom"/>
</dbReference>
<dbReference type="InterPro" id="IPR017274">
    <property type="entry name" value="YlbP"/>
</dbReference>
<dbReference type="NCBIfam" id="NF010241">
    <property type="entry name" value="PRK13688.1"/>
    <property type="match status" value="1"/>
</dbReference>
<dbReference type="Pfam" id="PF00583">
    <property type="entry name" value="Acetyltransf_1"/>
    <property type="match status" value="1"/>
</dbReference>
<dbReference type="PIRSF" id="PIRSF037732">
    <property type="entry name" value="YlbP_prd"/>
    <property type="match status" value="1"/>
</dbReference>
<dbReference type="SUPFAM" id="SSF55729">
    <property type="entry name" value="Acyl-CoA N-acyltransferases (Nat)"/>
    <property type="match status" value="1"/>
</dbReference>
<dbReference type="PROSITE" id="PS51186">
    <property type="entry name" value="GNAT"/>
    <property type="match status" value="1"/>
</dbReference>
<proteinExistence type="inferred from homology"/>
<protein>
    <recommendedName>
        <fullName>Uncharacterized N-acetyltransferase BLi01727/BL05157</fullName>
        <ecNumber>2.3.1.-</ecNumber>
    </recommendedName>
</protein>
<gene>
    <name type="ordered locus">BLi01727</name>
    <name type="ordered locus">BL05157</name>
</gene>